<accession>Q6G7V6</accession>
<sequence>MLNRTILVGRLTRDPELRTTQSGVNVASFTLAVNRTFTNAQGEREADFINIIVFKKQAENVNKYLSKGSLAGVDGRLQTRNYENKEGQRVYVTEVVADSIQFLEPKNTDDNQQDLYQQQAQQTRGQSQYSNNKPVKDNPFANANCPIEIDDNDLPF</sequence>
<dbReference type="EMBL" id="BX571857">
    <property type="protein sequence ID" value="CAG43711.1"/>
    <property type="molecule type" value="Genomic_DNA"/>
</dbReference>
<dbReference type="SMR" id="Q6G7V6"/>
<dbReference type="KEGG" id="sas:SAS1904"/>
<dbReference type="HOGENOM" id="CLU_078758_6_1_9"/>
<dbReference type="GO" id="GO:0009295">
    <property type="term" value="C:nucleoid"/>
    <property type="evidence" value="ECO:0007669"/>
    <property type="project" value="TreeGrafter"/>
</dbReference>
<dbReference type="GO" id="GO:0003697">
    <property type="term" value="F:single-stranded DNA binding"/>
    <property type="evidence" value="ECO:0007669"/>
    <property type="project" value="UniProtKB-UniRule"/>
</dbReference>
<dbReference type="GO" id="GO:0006260">
    <property type="term" value="P:DNA replication"/>
    <property type="evidence" value="ECO:0007669"/>
    <property type="project" value="InterPro"/>
</dbReference>
<dbReference type="CDD" id="cd04496">
    <property type="entry name" value="SSB_OBF"/>
    <property type="match status" value="1"/>
</dbReference>
<dbReference type="FunFam" id="2.40.50.140:FF:000084">
    <property type="entry name" value="Single-stranded DNA-binding protein"/>
    <property type="match status" value="1"/>
</dbReference>
<dbReference type="Gene3D" id="2.40.50.140">
    <property type="entry name" value="Nucleic acid-binding proteins"/>
    <property type="match status" value="1"/>
</dbReference>
<dbReference type="HAMAP" id="MF_00984">
    <property type="entry name" value="SSB"/>
    <property type="match status" value="1"/>
</dbReference>
<dbReference type="InterPro" id="IPR012340">
    <property type="entry name" value="NA-bd_OB-fold"/>
</dbReference>
<dbReference type="InterPro" id="IPR000424">
    <property type="entry name" value="Primosome_PriB/ssb"/>
</dbReference>
<dbReference type="InterPro" id="IPR011344">
    <property type="entry name" value="ssDNA-bd"/>
</dbReference>
<dbReference type="NCBIfam" id="TIGR00621">
    <property type="entry name" value="ssb"/>
    <property type="match status" value="1"/>
</dbReference>
<dbReference type="PANTHER" id="PTHR10302">
    <property type="entry name" value="SINGLE-STRANDED DNA-BINDING PROTEIN"/>
    <property type="match status" value="1"/>
</dbReference>
<dbReference type="PANTHER" id="PTHR10302:SF27">
    <property type="entry name" value="SINGLE-STRANDED DNA-BINDING PROTEIN"/>
    <property type="match status" value="1"/>
</dbReference>
<dbReference type="Pfam" id="PF00436">
    <property type="entry name" value="SSB"/>
    <property type="match status" value="1"/>
</dbReference>
<dbReference type="PIRSF" id="PIRSF002070">
    <property type="entry name" value="SSB"/>
    <property type="match status" value="1"/>
</dbReference>
<dbReference type="SUPFAM" id="SSF50249">
    <property type="entry name" value="Nucleic acid-binding proteins"/>
    <property type="match status" value="1"/>
</dbReference>
<dbReference type="PROSITE" id="PS50935">
    <property type="entry name" value="SSB"/>
    <property type="match status" value="1"/>
</dbReference>
<evidence type="ECO:0000255" key="1">
    <source>
        <dbReference type="HAMAP-Rule" id="MF_00984"/>
    </source>
</evidence>
<evidence type="ECO:0000256" key="2">
    <source>
        <dbReference type="SAM" id="MobiDB-lite"/>
    </source>
</evidence>
<comment type="subunit">
    <text evidence="1">Homotetramer.</text>
</comment>
<organism>
    <name type="scientific">Staphylococcus aureus (strain MSSA476)</name>
    <dbReference type="NCBI Taxonomy" id="282459"/>
    <lineage>
        <taxon>Bacteria</taxon>
        <taxon>Bacillati</taxon>
        <taxon>Bacillota</taxon>
        <taxon>Bacilli</taxon>
        <taxon>Bacillales</taxon>
        <taxon>Staphylococcaceae</taxon>
        <taxon>Staphylococcus</taxon>
    </lineage>
</organism>
<keyword id="KW-0238">DNA-binding</keyword>
<proteinExistence type="inferred from homology"/>
<gene>
    <name type="primary">ssb1</name>
    <name type="ordered locus">SAS1904</name>
</gene>
<reference key="1">
    <citation type="journal article" date="2004" name="Proc. Natl. Acad. Sci. U.S.A.">
        <title>Complete genomes of two clinical Staphylococcus aureus strains: evidence for the rapid evolution of virulence and drug resistance.</title>
        <authorList>
            <person name="Holden M.T.G."/>
            <person name="Feil E.J."/>
            <person name="Lindsay J.A."/>
            <person name="Peacock S.J."/>
            <person name="Day N.P.J."/>
            <person name="Enright M.C."/>
            <person name="Foster T.J."/>
            <person name="Moore C.E."/>
            <person name="Hurst L."/>
            <person name="Atkin R."/>
            <person name="Barron A."/>
            <person name="Bason N."/>
            <person name="Bentley S.D."/>
            <person name="Chillingworth C."/>
            <person name="Chillingworth T."/>
            <person name="Churcher C."/>
            <person name="Clark L."/>
            <person name="Corton C."/>
            <person name="Cronin A."/>
            <person name="Doggett J."/>
            <person name="Dowd L."/>
            <person name="Feltwell T."/>
            <person name="Hance Z."/>
            <person name="Harris B."/>
            <person name="Hauser H."/>
            <person name="Holroyd S."/>
            <person name="Jagels K."/>
            <person name="James K.D."/>
            <person name="Lennard N."/>
            <person name="Line A."/>
            <person name="Mayes R."/>
            <person name="Moule S."/>
            <person name="Mungall K."/>
            <person name="Ormond D."/>
            <person name="Quail M.A."/>
            <person name="Rabbinowitsch E."/>
            <person name="Rutherford K.M."/>
            <person name="Sanders M."/>
            <person name="Sharp S."/>
            <person name="Simmonds M."/>
            <person name="Stevens K."/>
            <person name="Whitehead S."/>
            <person name="Barrell B.G."/>
            <person name="Spratt B.G."/>
            <person name="Parkhill J."/>
        </authorList>
    </citation>
    <scope>NUCLEOTIDE SEQUENCE [LARGE SCALE GENOMIC DNA]</scope>
    <source>
        <strain>MSSA476</strain>
    </source>
</reference>
<feature type="chain" id="PRO_0000096103" description="Single-stranded DNA-binding protein 1">
    <location>
        <begin position="1"/>
        <end position="156"/>
    </location>
</feature>
<feature type="domain" description="SSB" evidence="1">
    <location>
        <begin position="1"/>
        <end position="104"/>
    </location>
</feature>
<feature type="region of interest" description="Disordered" evidence="2">
    <location>
        <begin position="122"/>
        <end position="146"/>
    </location>
</feature>
<protein>
    <recommendedName>
        <fullName evidence="1">Single-stranded DNA-binding protein 1</fullName>
        <shortName evidence="1">SSB 1</shortName>
    </recommendedName>
</protein>
<name>SSB1_STAAS</name>